<evidence type="ECO:0000250" key="1"/>
<evidence type="ECO:0000255" key="2">
    <source>
        <dbReference type="PROSITE-ProRule" id="PRU00037"/>
    </source>
</evidence>
<protein>
    <recommendedName>
        <fullName>Kelch-like protein 13</fullName>
    </recommendedName>
</protein>
<proteinExistence type="evidence at transcript level"/>
<keyword id="KW-0131">Cell cycle</keyword>
<keyword id="KW-0132">Cell division</keyword>
<keyword id="KW-0880">Kelch repeat</keyword>
<keyword id="KW-0498">Mitosis</keyword>
<keyword id="KW-1185">Reference proteome</keyword>
<keyword id="KW-0677">Repeat</keyword>
<keyword id="KW-0833">Ubl conjugation pathway</keyword>
<accession>A6QQY2</accession>
<comment type="function">
    <text evidence="1">Substrate-specific adapter of a BCR (BTB-CUL3-RBX1) E3 ubiquitin-protein ligase complex required for mitotic progression and cytokinesis. The BCR(KLHL9-KLHL13) E3 ubiquitin ligase complex mediates the ubiquitination of AURKB and controls the dynamic behavior of AURKB on mitotic chromosomes and thereby coordinates faithful mitotic progression and completion of cytokinesis (By similarity).</text>
</comment>
<comment type="pathway">
    <text>Protein modification; protein ubiquitination.</text>
</comment>
<comment type="subunit">
    <text evidence="1">Component of the BCR(KLHL9-KLHL13) E3 ubiquitin ligase complex, at least composed of CUL3, KLHL9, KLHL13 and RBX1. Interacts with AURKB (By similarity).</text>
</comment>
<name>KLH13_BOVIN</name>
<gene>
    <name type="primary">KLHL13</name>
</gene>
<reference key="1">
    <citation type="submission" date="2007-07" db="EMBL/GenBank/DDBJ databases">
        <authorList>
            <consortium name="NIH - Mammalian Gene Collection (MGC) project"/>
        </authorList>
    </citation>
    <scope>NUCLEOTIDE SEQUENCE [LARGE SCALE MRNA]</scope>
    <source>
        <strain>Hereford</strain>
        <tissue>Fetal brain</tissue>
    </source>
</reference>
<dbReference type="EMBL" id="BC150039">
    <property type="protein sequence ID" value="AAI50040.1"/>
    <property type="molecule type" value="mRNA"/>
</dbReference>
<dbReference type="RefSeq" id="NP_001095981.1">
    <property type="nucleotide sequence ID" value="NM_001102511.1"/>
</dbReference>
<dbReference type="SMR" id="A6QQY2"/>
<dbReference type="FunCoup" id="A6QQY2">
    <property type="interactions" value="478"/>
</dbReference>
<dbReference type="STRING" id="9913.ENSBTAP00000000639"/>
<dbReference type="PaxDb" id="9913-ENSBTAP00000000639"/>
<dbReference type="Ensembl" id="ENSBTAT00000000639.5">
    <property type="protein sequence ID" value="ENSBTAP00000000639.4"/>
    <property type="gene ID" value="ENSBTAG00000000501.7"/>
</dbReference>
<dbReference type="GeneID" id="528138"/>
<dbReference type="KEGG" id="bta:528138"/>
<dbReference type="CTD" id="90293"/>
<dbReference type="VEuPathDB" id="HostDB:ENSBTAG00000000501"/>
<dbReference type="VGNC" id="VGNC:30643">
    <property type="gene designation" value="KLHL13"/>
</dbReference>
<dbReference type="eggNOG" id="KOG4441">
    <property type="taxonomic scope" value="Eukaryota"/>
</dbReference>
<dbReference type="GeneTree" id="ENSGT00940000154359"/>
<dbReference type="HOGENOM" id="CLU_004253_14_3_1"/>
<dbReference type="InParanoid" id="A6QQY2"/>
<dbReference type="OMA" id="XGITHDT"/>
<dbReference type="OrthoDB" id="1925334at2759"/>
<dbReference type="TreeFam" id="TF328485"/>
<dbReference type="Reactome" id="R-BTA-8951664">
    <property type="pathway name" value="Neddylation"/>
</dbReference>
<dbReference type="Reactome" id="R-BTA-983168">
    <property type="pathway name" value="Antigen processing: Ubiquitination &amp; Proteasome degradation"/>
</dbReference>
<dbReference type="UniPathway" id="UPA00143"/>
<dbReference type="Proteomes" id="UP000009136">
    <property type="component" value="Chromosome X"/>
</dbReference>
<dbReference type="Bgee" id="ENSBTAG00000000501">
    <property type="expression patterns" value="Expressed in floor plate of diencephalon and 98 other cell types or tissues"/>
</dbReference>
<dbReference type="GO" id="GO:0031463">
    <property type="term" value="C:Cul3-RING ubiquitin ligase complex"/>
    <property type="evidence" value="ECO:0000250"/>
    <property type="project" value="UniProtKB"/>
</dbReference>
<dbReference type="GO" id="GO:0097602">
    <property type="term" value="F:cullin family protein binding"/>
    <property type="evidence" value="ECO:0000318"/>
    <property type="project" value="GO_Central"/>
</dbReference>
<dbReference type="GO" id="GO:0051301">
    <property type="term" value="P:cell division"/>
    <property type="evidence" value="ECO:0007669"/>
    <property type="project" value="UniProtKB-KW"/>
</dbReference>
<dbReference type="GO" id="GO:0016567">
    <property type="term" value="P:protein ubiquitination"/>
    <property type="evidence" value="ECO:0000250"/>
    <property type="project" value="UniProtKB"/>
</dbReference>
<dbReference type="GO" id="GO:0032465">
    <property type="term" value="P:regulation of cytokinesis"/>
    <property type="evidence" value="ECO:0000250"/>
    <property type="project" value="UniProtKB"/>
</dbReference>
<dbReference type="CDD" id="cd18449">
    <property type="entry name" value="BACK_KLHL9_13"/>
    <property type="match status" value="1"/>
</dbReference>
<dbReference type="CDD" id="cd18239">
    <property type="entry name" value="BTB_POZ_KLHL9_13"/>
    <property type="match status" value="1"/>
</dbReference>
<dbReference type="FunFam" id="1.25.40.420:FF:000002">
    <property type="entry name" value="Kelch-like family member 13"/>
    <property type="match status" value="1"/>
</dbReference>
<dbReference type="FunFam" id="2.120.10.80:FF:000001">
    <property type="entry name" value="Kelch-like family member 13"/>
    <property type="match status" value="1"/>
</dbReference>
<dbReference type="FunFam" id="3.30.710.10:FF:000011">
    <property type="entry name" value="Kelch-like family member 13"/>
    <property type="match status" value="1"/>
</dbReference>
<dbReference type="Gene3D" id="1.25.40.420">
    <property type="match status" value="1"/>
</dbReference>
<dbReference type="Gene3D" id="2.120.10.80">
    <property type="entry name" value="Kelch-type beta propeller"/>
    <property type="match status" value="1"/>
</dbReference>
<dbReference type="Gene3D" id="3.30.710.10">
    <property type="entry name" value="Potassium Channel Kv1.1, Chain A"/>
    <property type="match status" value="1"/>
</dbReference>
<dbReference type="InterPro" id="IPR011705">
    <property type="entry name" value="BACK"/>
</dbReference>
<dbReference type="InterPro" id="IPR017096">
    <property type="entry name" value="BTB-kelch_protein"/>
</dbReference>
<dbReference type="InterPro" id="IPR000210">
    <property type="entry name" value="BTB/POZ_dom"/>
</dbReference>
<dbReference type="InterPro" id="IPR015915">
    <property type="entry name" value="Kelch-typ_b-propeller"/>
</dbReference>
<dbReference type="InterPro" id="IPR006652">
    <property type="entry name" value="Kelch_1"/>
</dbReference>
<dbReference type="InterPro" id="IPR011333">
    <property type="entry name" value="SKP1/BTB/POZ_sf"/>
</dbReference>
<dbReference type="PANTHER" id="PTHR45632:SF7">
    <property type="entry name" value="KELCH-LIKE PROTEIN 13"/>
    <property type="match status" value="1"/>
</dbReference>
<dbReference type="PANTHER" id="PTHR45632">
    <property type="entry name" value="LD33804P"/>
    <property type="match status" value="1"/>
</dbReference>
<dbReference type="Pfam" id="PF07707">
    <property type="entry name" value="BACK"/>
    <property type="match status" value="1"/>
</dbReference>
<dbReference type="Pfam" id="PF00651">
    <property type="entry name" value="BTB"/>
    <property type="match status" value="1"/>
</dbReference>
<dbReference type="Pfam" id="PF01344">
    <property type="entry name" value="Kelch_1"/>
    <property type="match status" value="1"/>
</dbReference>
<dbReference type="Pfam" id="PF24681">
    <property type="entry name" value="Kelch_KLHDC2_KLHL20_DRC7"/>
    <property type="match status" value="1"/>
</dbReference>
<dbReference type="PIRSF" id="PIRSF037037">
    <property type="entry name" value="Kelch-like_protein_gigaxonin"/>
    <property type="match status" value="1"/>
</dbReference>
<dbReference type="SMART" id="SM00875">
    <property type="entry name" value="BACK"/>
    <property type="match status" value="1"/>
</dbReference>
<dbReference type="SMART" id="SM00225">
    <property type="entry name" value="BTB"/>
    <property type="match status" value="1"/>
</dbReference>
<dbReference type="SMART" id="SM00612">
    <property type="entry name" value="Kelch"/>
    <property type="match status" value="6"/>
</dbReference>
<dbReference type="SUPFAM" id="SSF117281">
    <property type="entry name" value="Kelch motif"/>
    <property type="match status" value="1"/>
</dbReference>
<dbReference type="SUPFAM" id="SSF54695">
    <property type="entry name" value="POZ domain"/>
    <property type="match status" value="1"/>
</dbReference>
<dbReference type="PROSITE" id="PS50097">
    <property type="entry name" value="BTB"/>
    <property type="match status" value="1"/>
</dbReference>
<feature type="chain" id="PRO_0000378195" description="Kelch-like protein 13">
    <location>
        <begin position="1"/>
        <end position="655"/>
    </location>
</feature>
<feature type="domain" description="BTB" evidence="2">
    <location>
        <begin position="92"/>
        <end position="161"/>
    </location>
</feature>
<feature type="domain" description="BACK">
    <location>
        <begin position="196"/>
        <end position="297"/>
    </location>
</feature>
<feature type="repeat" description="Kelch 1">
    <location>
        <begin position="341"/>
        <end position="389"/>
    </location>
</feature>
<feature type="repeat" description="Kelch 2">
    <location>
        <begin position="390"/>
        <end position="441"/>
    </location>
</feature>
<feature type="repeat" description="Kelch 3">
    <location>
        <begin position="442"/>
        <end position="488"/>
    </location>
</feature>
<feature type="repeat" description="Kelch 4">
    <location>
        <begin position="490"/>
        <end position="535"/>
    </location>
</feature>
<feature type="repeat" description="Kelch 5">
    <location>
        <begin position="537"/>
        <end position="587"/>
    </location>
</feature>
<feature type="repeat" description="Kelch 6">
    <location>
        <begin position="588"/>
        <end position="636"/>
    </location>
</feature>
<sequence>MPLKWKTSSPAIWKFPVPVLKTSRSTPLSPAYISLVEEEDQHMKLSLGSSEMGLSSHLQSSKAGTTRIFTSNTHSSVVLQGFDQLRLEGLLCDVTLMPGDTDDAFPVHRVMMASASDYFKAMFTGGMKEQDLMCIKLHGVSKVGLRKIIDFIYTAKLSLNMDNLQDTLEAASFLQILPVLDFCKVFLISGVTLDNCVEVGRIANTYNLTEVDKYVNSFVLKNFPALLSTGEFLKLPFERLAFVLSSNSLKHCTELELFKATCRWLRLEEPRMDFAAKLMKNIRFPLMTPQELINYVQTVDFMRTDNTCVNLLLEASNYQMMPYMQPVMQSDRTAIRSDTTHLVTLGGVLRQQLVVSKELRMYDEKAHEWKSLAPMDAPRYQHGIAVIGNFLYVVGGQSNYDTKGKTAVDTVFRFDPRYNKWMQVASLNEKRTFFHLSALKGYLYAVGGRNAAGELPTVECYNPRTNEWTYVAKMSEPHYGHAGTVYGGVMYISGGITHDTFQKELMCFDPDTDKWIQKAPMTTVRGLHCMCTVGERLYVIGGNHFRGTSDYDDVLSCEYYSPILDQWTPIAAMLRGQSDVGVAVFENKIYVVGGYSWNNRCMVEIVQKYDPDKDEWHKVFDLPESLGGIRACTLTVFPPEETTPSPSRESPLSAP</sequence>
<organism>
    <name type="scientific">Bos taurus</name>
    <name type="common">Bovine</name>
    <dbReference type="NCBI Taxonomy" id="9913"/>
    <lineage>
        <taxon>Eukaryota</taxon>
        <taxon>Metazoa</taxon>
        <taxon>Chordata</taxon>
        <taxon>Craniata</taxon>
        <taxon>Vertebrata</taxon>
        <taxon>Euteleostomi</taxon>
        <taxon>Mammalia</taxon>
        <taxon>Eutheria</taxon>
        <taxon>Laurasiatheria</taxon>
        <taxon>Artiodactyla</taxon>
        <taxon>Ruminantia</taxon>
        <taxon>Pecora</taxon>
        <taxon>Bovidae</taxon>
        <taxon>Bovinae</taxon>
        <taxon>Bos</taxon>
    </lineage>
</organism>